<accession>C3MR85</accession>
<gene>
    <name evidence="1" type="primary">rpl10</name>
    <name evidence="1" type="synonym">rplP0</name>
    <name type="ordered locus">LS215_1903</name>
</gene>
<feature type="chain" id="PRO_1000204814" description="Large ribosomal subunit protein uL10">
    <location>
        <begin position="1"/>
        <end position="338"/>
    </location>
</feature>
<feature type="region of interest" description="Disordered" evidence="2">
    <location>
        <begin position="297"/>
        <end position="338"/>
    </location>
</feature>
<feature type="compositionally biased region" description="Low complexity" evidence="2">
    <location>
        <begin position="298"/>
        <end position="308"/>
    </location>
</feature>
<feature type="compositionally biased region" description="Basic and acidic residues" evidence="2">
    <location>
        <begin position="309"/>
        <end position="325"/>
    </location>
</feature>
<sequence>MKRLALALKQKKVASWKLEEVKELTELIKNSNTILIGSLEGFPADKLHEIRKKLRGKAIIKVTKNTLFKIAAKNAGISTEKLEQYLTGPNVFIFTKDNPFLTNMFFENYKLRRYAMPGDKAEEEVIIPAGDTGMPAGPILSVFGKLKVQTKVQDGKVHVVKDTVVAKPGDVIPTEALPILQKLGIMPVYVKLKIKVAYHEGLVIPAENLKLNLEGYRSNIAEAYRNAFTLAVEIAYPVPDVLKFTINKIFKNAITLASEIGYLTPESAQAVISKAVAKAYALATAISGKVDLGVKLPSAQQTQTQQSTAEEKKEEKKEEEKKGPSEEEIGSGLASLFG</sequence>
<protein>
    <recommendedName>
        <fullName evidence="1">Large ribosomal subunit protein uL10</fullName>
    </recommendedName>
    <alternativeName>
        <fullName evidence="3">50S ribosomal protein L10</fullName>
    </alternativeName>
    <alternativeName>
        <fullName evidence="1">Acidic ribosomal protein P0 homolog</fullName>
    </alternativeName>
</protein>
<evidence type="ECO:0000255" key="1">
    <source>
        <dbReference type="HAMAP-Rule" id="MF_00280"/>
    </source>
</evidence>
<evidence type="ECO:0000256" key="2">
    <source>
        <dbReference type="SAM" id="MobiDB-lite"/>
    </source>
</evidence>
<evidence type="ECO:0000305" key="3"/>
<keyword id="KW-0687">Ribonucleoprotein</keyword>
<keyword id="KW-0689">Ribosomal protein</keyword>
<keyword id="KW-0694">RNA-binding</keyword>
<keyword id="KW-0699">rRNA-binding</keyword>
<dbReference type="EMBL" id="CP001399">
    <property type="protein sequence ID" value="ACP35898.1"/>
    <property type="molecule type" value="Genomic_DNA"/>
</dbReference>
<dbReference type="RefSeq" id="WP_012713970.1">
    <property type="nucleotide sequence ID" value="NC_012589.1"/>
</dbReference>
<dbReference type="SMR" id="C3MR85"/>
<dbReference type="GeneID" id="7807282"/>
<dbReference type="KEGG" id="sis:LS215_1903"/>
<dbReference type="HOGENOM" id="CLU_053173_0_0_2"/>
<dbReference type="OrthoDB" id="30930at2157"/>
<dbReference type="Proteomes" id="UP000001747">
    <property type="component" value="Chromosome"/>
</dbReference>
<dbReference type="GO" id="GO:0022625">
    <property type="term" value="C:cytosolic large ribosomal subunit"/>
    <property type="evidence" value="ECO:0007669"/>
    <property type="project" value="TreeGrafter"/>
</dbReference>
<dbReference type="GO" id="GO:0070180">
    <property type="term" value="F:large ribosomal subunit rRNA binding"/>
    <property type="evidence" value="ECO:0007669"/>
    <property type="project" value="UniProtKB-UniRule"/>
</dbReference>
<dbReference type="GO" id="GO:0003735">
    <property type="term" value="F:structural constituent of ribosome"/>
    <property type="evidence" value="ECO:0007669"/>
    <property type="project" value="TreeGrafter"/>
</dbReference>
<dbReference type="GO" id="GO:0002181">
    <property type="term" value="P:cytoplasmic translation"/>
    <property type="evidence" value="ECO:0007669"/>
    <property type="project" value="TreeGrafter"/>
</dbReference>
<dbReference type="GO" id="GO:0000027">
    <property type="term" value="P:ribosomal large subunit assembly"/>
    <property type="evidence" value="ECO:0007669"/>
    <property type="project" value="TreeGrafter"/>
</dbReference>
<dbReference type="CDD" id="cd05795">
    <property type="entry name" value="Ribosomal_P0_L10e"/>
    <property type="match status" value="1"/>
</dbReference>
<dbReference type="FunFam" id="3.90.105.20:FF:000001">
    <property type="entry name" value="60S acidic ribosomal protein P0"/>
    <property type="match status" value="1"/>
</dbReference>
<dbReference type="Gene3D" id="3.30.70.1730">
    <property type="match status" value="1"/>
</dbReference>
<dbReference type="Gene3D" id="3.90.105.20">
    <property type="match status" value="1"/>
</dbReference>
<dbReference type="Gene3D" id="6.10.140.760">
    <property type="match status" value="1"/>
</dbReference>
<dbReference type="HAMAP" id="MF_00280">
    <property type="entry name" value="Ribosomal_uL10_arch"/>
    <property type="match status" value="1"/>
</dbReference>
<dbReference type="InterPro" id="IPR050323">
    <property type="entry name" value="Ribosomal_protein_uL10"/>
</dbReference>
<dbReference type="InterPro" id="IPR001790">
    <property type="entry name" value="Ribosomal_uL10"/>
</dbReference>
<dbReference type="InterPro" id="IPR040637">
    <property type="entry name" value="Ribosomal_uL10-like_insert"/>
</dbReference>
<dbReference type="InterPro" id="IPR043164">
    <property type="entry name" value="Ribosomal_uL10-like_insert_sf"/>
</dbReference>
<dbReference type="InterPro" id="IPR043141">
    <property type="entry name" value="Ribosomal_uL10-like_sf"/>
</dbReference>
<dbReference type="InterPro" id="IPR022909">
    <property type="entry name" value="Ribosomal_uL10_arc"/>
</dbReference>
<dbReference type="NCBIfam" id="NF003095">
    <property type="entry name" value="PRK04019.1-1"/>
    <property type="match status" value="1"/>
</dbReference>
<dbReference type="PANTHER" id="PTHR45699">
    <property type="entry name" value="60S ACIDIC RIBOSOMAL PROTEIN P0"/>
    <property type="match status" value="1"/>
</dbReference>
<dbReference type="PANTHER" id="PTHR45699:SF3">
    <property type="entry name" value="LARGE RIBOSOMAL SUBUNIT PROTEIN UL10"/>
    <property type="match status" value="1"/>
</dbReference>
<dbReference type="Pfam" id="PF00466">
    <property type="entry name" value="Ribosomal_L10"/>
    <property type="match status" value="1"/>
</dbReference>
<dbReference type="Pfam" id="PF17777">
    <property type="entry name" value="RL10P_insert"/>
    <property type="match status" value="1"/>
</dbReference>
<dbReference type="SUPFAM" id="SSF160369">
    <property type="entry name" value="Ribosomal protein L10-like"/>
    <property type="match status" value="1"/>
</dbReference>
<comment type="function">
    <text evidence="1">Forms part of the ribosomal stalk, playing a central role in the interaction of the ribosome with GTP-bound translation factors.</text>
</comment>
<comment type="subunit">
    <text evidence="1">Part of the 50S ribosomal subunit. Forms part of the ribosomal stalk which helps the ribosome interact with GTP-bound translation factors. Forms a heptameric L10(L12)2(L12)2(L12)2 complex, where L10 forms an elongated spine to which the L12 dimers bind in a sequential fashion.</text>
</comment>
<comment type="similarity">
    <text evidence="1">Belongs to the universal ribosomal protein uL10 family.</text>
</comment>
<name>RL10_SACI2</name>
<reference key="1">
    <citation type="journal article" date="2009" name="Proc. Natl. Acad. Sci. U.S.A.">
        <title>Biogeography of the Sulfolobus islandicus pan-genome.</title>
        <authorList>
            <person name="Reno M.L."/>
            <person name="Held N.L."/>
            <person name="Fields C.J."/>
            <person name="Burke P.V."/>
            <person name="Whitaker R.J."/>
        </authorList>
    </citation>
    <scope>NUCLEOTIDE SEQUENCE [LARGE SCALE GENOMIC DNA]</scope>
    <source>
        <strain>L.S.2.15 / Lassen #1</strain>
    </source>
</reference>
<organism>
    <name type="scientific">Saccharolobus islandicus (strain L.S.2.15 / Lassen #1)</name>
    <name type="common">Sulfolobus islandicus</name>
    <dbReference type="NCBI Taxonomy" id="429572"/>
    <lineage>
        <taxon>Archaea</taxon>
        <taxon>Thermoproteota</taxon>
        <taxon>Thermoprotei</taxon>
        <taxon>Sulfolobales</taxon>
        <taxon>Sulfolobaceae</taxon>
        <taxon>Saccharolobus</taxon>
    </lineage>
</organism>
<proteinExistence type="inferred from homology"/>